<accession>P47771</accession>
<accession>D6VZZ2</accession>
<comment type="function">
    <text evidence="4 6">Cytoplasmic aldehyde dehydrogenase involved in ethanol oxidation. Required for pantothenic acid production through the conversion of 3-aminopropanal to beta-alanine, an intermediate in pantothenic acid (vitamin B5) and coenzyme A (CoA) biosynthesis.</text>
</comment>
<comment type="catalytic activity">
    <reaction evidence="4 6">
        <text>an aldehyde + NAD(+) + H2O = a carboxylate + NADH + 2 H(+)</text>
        <dbReference type="Rhea" id="RHEA:16185"/>
        <dbReference type="ChEBI" id="CHEBI:15377"/>
        <dbReference type="ChEBI" id="CHEBI:15378"/>
        <dbReference type="ChEBI" id="CHEBI:17478"/>
        <dbReference type="ChEBI" id="CHEBI:29067"/>
        <dbReference type="ChEBI" id="CHEBI:57540"/>
        <dbReference type="ChEBI" id="CHEBI:57945"/>
        <dbReference type="EC" id="1.2.1.3"/>
    </reaction>
</comment>
<comment type="catalytic activity">
    <reaction evidence="4 6">
        <text>3-aminopropanal + NAD(+) + H2O = beta-alanine + NADH + 2 H(+)</text>
        <dbReference type="Rhea" id="RHEA:30695"/>
        <dbReference type="ChEBI" id="CHEBI:15377"/>
        <dbReference type="ChEBI" id="CHEBI:15378"/>
        <dbReference type="ChEBI" id="CHEBI:57540"/>
        <dbReference type="ChEBI" id="CHEBI:57945"/>
        <dbReference type="ChEBI" id="CHEBI:57966"/>
        <dbReference type="ChEBI" id="CHEBI:58374"/>
    </reaction>
    <physiologicalReaction direction="left-to-right" evidence="10">
        <dbReference type="Rhea" id="RHEA:30696"/>
    </physiologicalReaction>
</comment>
<comment type="subcellular location">
    <subcellularLocation>
        <location evidence="5">Cytoplasm</location>
    </subcellularLocation>
</comment>
<comment type="induction">
    <text evidence="4 7">Expression is under the control of MSN2 and MSN4, and is induced during diauxic shift and osmotic stress.</text>
</comment>
<comment type="miscellaneous">
    <text evidence="8">Present with 2070 molecules/cell in log phase SD medium.</text>
</comment>
<comment type="similarity">
    <text evidence="9">Belongs to the aldehyde dehydrogenase family.</text>
</comment>
<evidence type="ECO:0000250" key="1"/>
<evidence type="ECO:0000255" key="2">
    <source>
        <dbReference type="PROSITE-ProRule" id="PRU10007"/>
    </source>
</evidence>
<evidence type="ECO:0000255" key="3">
    <source>
        <dbReference type="PROSITE-ProRule" id="PRU10008"/>
    </source>
</evidence>
<evidence type="ECO:0000269" key="4">
    <source>
    </source>
</evidence>
<evidence type="ECO:0000269" key="5">
    <source>
    </source>
</evidence>
<evidence type="ECO:0000269" key="6">
    <source>
    </source>
</evidence>
<evidence type="ECO:0000269" key="7">
    <source>
    </source>
</evidence>
<evidence type="ECO:0000269" key="8">
    <source>
    </source>
</evidence>
<evidence type="ECO:0000305" key="9"/>
<evidence type="ECO:0000305" key="10">
    <source>
    </source>
</evidence>
<name>ALDH2_YEAST</name>
<gene>
    <name type="primary">ALD2</name>
    <name type="synonym">ALD5</name>
    <name type="ordered locus">YMR170C</name>
    <name type="ORF">YM8520.19C</name>
</gene>
<feature type="chain" id="PRO_0000056439" description="Aldehyde dehydrogenase [NAD(P)+] 1">
    <location>
        <begin position="1"/>
        <end position="506"/>
    </location>
</feature>
<feature type="active site" description="Proton acceptor" evidence="2 3">
    <location>
        <position position="268"/>
    </location>
</feature>
<feature type="active site" description="Nucleophile" evidence="2 3">
    <location>
        <position position="302"/>
    </location>
</feature>
<feature type="site" description="Transition state stabilizer" evidence="1">
    <location>
        <position position="169"/>
    </location>
</feature>
<feature type="sequence conflict" description="In Ref. 1; CAA59975." evidence="9" ref="1">
    <original>L</original>
    <variation>C</variation>
    <location>
        <position position="23"/>
    </location>
</feature>
<feature type="sequence conflict" description="In Ref. 1; CAA59975." evidence="9" ref="1">
    <original>S</original>
    <variation>Q</variation>
    <location>
        <position position="462"/>
    </location>
</feature>
<feature type="sequence conflict" description="In Ref. 1; CAA59975." evidence="9" ref="1">
    <original>QSG</original>
    <variation>DNV</variation>
    <location>
        <begin position="486"/>
        <end position="488"/>
    </location>
</feature>
<feature type="sequence conflict" description="In Ref. 1; CAA59975." evidence="9" ref="1">
    <original>A</original>
    <variation>S</variation>
    <location>
        <position position="497"/>
    </location>
</feature>
<feature type="sequence conflict" description="In Ref. 1; CAA59975." evidence="9" ref="1">
    <original>IN</original>
    <variation>MD</variation>
    <location>
        <begin position="500"/>
        <end position="501"/>
    </location>
</feature>
<organism>
    <name type="scientific">Saccharomyces cerevisiae (strain ATCC 204508 / S288c)</name>
    <name type="common">Baker's yeast</name>
    <dbReference type="NCBI Taxonomy" id="559292"/>
    <lineage>
        <taxon>Eukaryota</taxon>
        <taxon>Fungi</taxon>
        <taxon>Dikarya</taxon>
        <taxon>Ascomycota</taxon>
        <taxon>Saccharomycotina</taxon>
        <taxon>Saccharomycetes</taxon>
        <taxon>Saccharomycetales</taxon>
        <taxon>Saccharomycetaceae</taxon>
        <taxon>Saccharomyces</taxon>
    </lineage>
</organism>
<protein>
    <recommendedName>
        <fullName evidence="9">Aldehyde dehydrogenase [NAD(P)+] 1</fullName>
        <ecNumber evidence="4 6">1.2.1.3</ecNumber>
    </recommendedName>
</protein>
<sequence>MPTLYTDIEIPQLKISLKQPLGLFINNEFCPSSDGKTIETVNPATGEPITSFQAANEKDVDKAVKAARAAFDNVWSKTSSEQRGIYLSNLLKLIEEEQDTLAALETLDAGKPYHSNAKGDLAQILQLTRYFAGSADKFDKGATIPLTFNKFAYTLKVPFGVVAQIVPWNYPLAMACWKLQGALAAGNTVIIKPAENTSLSLLYFATLIKKAGFPPGVVNIVPGYGSLVGQALASHMDIDKISFTGSTKVGGFVLEASGQSNLKDVTLECGGKSPALVFEDADLDKAIDWIAAGIFYNSGQNCTANSRVYVQSSIYDKFVEKFKETAKKEWDVAGKFDPFDEKCIVGPVISSTQYDRIKSYIERGKREEKLDMFQTSEFPIGGAKGYFIPPTIFTDVPQTSKLLQDEIFGPVVVVSKFTNYDDALKLANDTCYGLASAVFTKDVKKAHMFARDIKAGTVWINSSNDEDVTVPFGGFKMSGIGRELGQSGVDTYLQTKAVHINLSLDN</sequence>
<dbReference type="EC" id="1.2.1.3" evidence="4 6"/>
<dbReference type="EMBL" id="X85987">
    <property type="protein sequence ID" value="CAA59975.1"/>
    <property type="molecule type" value="Genomic_DNA"/>
</dbReference>
<dbReference type="EMBL" id="Z49705">
    <property type="protein sequence ID" value="CAA89806.1"/>
    <property type="molecule type" value="Genomic_DNA"/>
</dbReference>
<dbReference type="EMBL" id="BK006946">
    <property type="protein sequence ID" value="DAA10066.1"/>
    <property type="molecule type" value="Genomic_DNA"/>
</dbReference>
<dbReference type="PIR" id="S70189">
    <property type="entry name" value="S54615"/>
</dbReference>
<dbReference type="RefSeq" id="NP_013893.1">
    <property type="nucleotide sequence ID" value="NM_001182674.1"/>
</dbReference>
<dbReference type="SMR" id="P47771"/>
<dbReference type="BioGRID" id="35348">
    <property type="interactions" value="58"/>
</dbReference>
<dbReference type="FunCoup" id="P47771">
    <property type="interactions" value="399"/>
</dbReference>
<dbReference type="IntAct" id="P47771">
    <property type="interactions" value="4"/>
</dbReference>
<dbReference type="MINT" id="P47771"/>
<dbReference type="STRING" id="4932.YMR170C"/>
<dbReference type="iPTMnet" id="P47771"/>
<dbReference type="PaxDb" id="4932-YMR170C"/>
<dbReference type="PeptideAtlas" id="P47771"/>
<dbReference type="EnsemblFungi" id="YMR170C_mRNA">
    <property type="protein sequence ID" value="YMR170C"/>
    <property type="gene ID" value="YMR170C"/>
</dbReference>
<dbReference type="GeneID" id="855206"/>
<dbReference type="KEGG" id="sce:YMR170C"/>
<dbReference type="AGR" id="SGD:S000004780"/>
<dbReference type="SGD" id="S000004780">
    <property type="gene designation" value="ALD2"/>
</dbReference>
<dbReference type="VEuPathDB" id="FungiDB:YMR170C"/>
<dbReference type="eggNOG" id="KOG2450">
    <property type="taxonomic scope" value="Eukaryota"/>
</dbReference>
<dbReference type="GeneTree" id="ENSGT00940000176434"/>
<dbReference type="HOGENOM" id="CLU_005391_0_1_1"/>
<dbReference type="InParanoid" id="P47771"/>
<dbReference type="OMA" id="ILMGAWK"/>
<dbReference type="OrthoDB" id="310895at2759"/>
<dbReference type="BioCyc" id="MetaCyc:YMR170C-MONOMER"/>
<dbReference type="BioCyc" id="YEAST:YMR170C-MONOMER"/>
<dbReference type="BioGRID-ORCS" id="855206">
    <property type="hits" value="0 hits in 10 CRISPR screens"/>
</dbReference>
<dbReference type="PRO" id="PR:P47771"/>
<dbReference type="Proteomes" id="UP000002311">
    <property type="component" value="Chromosome XIII"/>
</dbReference>
<dbReference type="RNAct" id="P47771">
    <property type="molecule type" value="protein"/>
</dbReference>
<dbReference type="GO" id="GO:0005737">
    <property type="term" value="C:cytoplasm"/>
    <property type="evidence" value="ECO:0007005"/>
    <property type="project" value="SGD"/>
</dbReference>
<dbReference type="GO" id="GO:0102244">
    <property type="term" value="F:3-aminopropanal dehydrogenase (NAD+) activity"/>
    <property type="evidence" value="ECO:0007669"/>
    <property type="project" value="RHEA"/>
</dbReference>
<dbReference type="GO" id="GO:0004029">
    <property type="term" value="F:aldehyde dehydrogenase (NAD+) activity"/>
    <property type="evidence" value="ECO:0000315"/>
    <property type="project" value="SGD"/>
</dbReference>
<dbReference type="GO" id="GO:0019483">
    <property type="term" value="P:beta-alanine biosynthetic process"/>
    <property type="evidence" value="ECO:0000315"/>
    <property type="project" value="SGD"/>
</dbReference>
<dbReference type="GO" id="GO:0015940">
    <property type="term" value="P:pantothenate biosynthetic process"/>
    <property type="evidence" value="ECO:0007669"/>
    <property type="project" value="UniProtKB-KW"/>
</dbReference>
<dbReference type="GO" id="GO:0006598">
    <property type="term" value="P:polyamine catabolic process"/>
    <property type="evidence" value="ECO:0000315"/>
    <property type="project" value="SGD"/>
</dbReference>
<dbReference type="CDD" id="cd07144">
    <property type="entry name" value="ALDH_ALD2-YMR170C"/>
    <property type="match status" value="1"/>
</dbReference>
<dbReference type="FunFam" id="3.40.605.10:FF:000001">
    <property type="entry name" value="Aldehyde dehydrogenase 1"/>
    <property type="match status" value="1"/>
</dbReference>
<dbReference type="FunFam" id="3.40.605.10:FF:000026">
    <property type="entry name" value="Aldehyde dehydrogenase, putative"/>
    <property type="match status" value="1"/>
</dbReference>
<dbReference type="FunFam" id="3.40.309.10:FF:000012">
    <property type="entry name" value="Betaine aldehyde dehydrogenase"/>
    <property type="match status" value="1"/>
</dbReference>
<dbReference type="Gene3D" id="3.40.605.10">
    <property type="entry name" value="Aldehyde Dehydrogenase, Chain A, domain 1"/>
    <property type="match status" value="1"/>
</dbReference>
<dbReference type="Gene3D" id="3.40.309.10">
    <property type="entry name" value="Aldehyde Dehydrogenase, Chain A, domain 2"/>
    <property type="match status" value="1"/>
</dbReference>
<dbReference type="InterPro" id="IPR016161">
    <property type="entry name" value="Ald_DH/histidinol_DH"/>
</dbReference>
<dbReference type="InterPro" id="IPR016163">
    <property type="entry name" value="Ald_DH_C"/>
</dbReference>
<dbReference type="InterPro" id="IPR016160">
    <property type="entry name" value="Ald_DH_CS_CYS"/>
</dbReference>
<dbReference type="InterPro" id="IPR029510">
    <property type="entry name" value="Ald_DH_CS_GLU"/>
</dbReference>
<dbReference type="InterPro" id="IPR016162">
    <property type="entry name" value="Ald_DH_N"/>
</dbReference>
<dbReference type="InterPro" id="IPR015590">
    <property type="entry name" value="Aldehyde_DH_dom"/>
</dbReference>
<dbReference type="PANTHER" id="PTHR43720">
    <property type="entry name" value="2-AMINOMUCONIC SEMIALDEHYDE DEHYDROGENASE"/>
    <property type="match status" value="1"/>
</dbReference>
<dbReference type="PANTHER" id="PTHR43720:SF2">
    <property type="entry name" value="2-AMINOMUCONIC SEMIALDEHYDE DEHYDROGENASE"/>
    <property type="match status" value="1"/>
</dbReference>
<dbReference type="Pfam" id="PF00171">
    <property type="entry name" value="Aldedh"/>
    <property type="match status" value="1"/>
</dbReference>
<dbReference type="SUPFAM" id="SSF53720">
    <property type="entry name" value="ALDH-like"/>
    <property type="match status" value="1"/>
</dbReference>
<dbReference type="PROSITE" id="PS00070">
    <property type="entry name" value="ALDEHYDE_DEHYDR_CYS"/>
    <property type="match status" value="1"/>
</dbReference>
<dbReference type="PROSITE" id="PS00687">
    <property type="entry name" value="ALDEHYDE_DEHYDR_GLU"/>
    <property type="match status" value="1"/>
</dbReference>
<reference key="1">
    <citation type="journal article" date="1995" name="Mol. Microbiol.">
        <title>A genomic locus in Saccharomyces cerevisiae with four genes up-regulated by osmotic stress.</title>
        <authorList>
            <person name="Miralles V.J."/>
            <person name="Serrano R."/>
        </authorList>
    </citation>
    <scope>NUCLEOTIDE SEQUENCE [GENOMIC DNA]</scope>
    <source>
        <strain>DBY939</strain>
    </source>
</reference>
<reference key="2">
    <citation type="journal article" date="1997" name="Nature">
        <title>The nucleotide sequence of Saccharomyces cerevisiae chromosome XIII.</title>
        <authorList>
            <person name="Bowman S."/>
            <person name="Churcher C.M."/>
            <person name="Badcock K."/>
            <person name="Brown D."/>
            <person name="Chillingworth T."/>
            <person name="Connor R."/>
            <person name="Dedman K."/>
            <person name="Devlin K."/>
            <person name="Gentles S."/>
            <person name="Hamlin N."/>
            <person name="Hunt S."/>
            <person name="Jagels K."/>
            <person name="Lye G."/>
            <person name="Moule S."/>
            <person name="Odell C."/>
            <person name="Pearson D."/>
            <person name="Rajandream M.A."/>
            <person name="Rice P."/>
            <person name="Skelton J."/>
            <person name="Walsh S.V."/>
            <person name="Whitehead S."/>
            <person name="Barrell B.G."/>
        </authorList>
    </citation>
    <scope>NUCLEOTIDE SEQUENCE [LARGE SCALE GENOMIC DNA]</scope>
    <source>
        <strain>ATCC 204508 / S288c</strain>
    </source>
</reference>
<reference key="3">
    <citation type="journal article" date="2014" name="G3 (Bethesda)">
        <title>The reference genome sequence of Saccharomyces cerevisiae: Then and now.</title>
        <authorList>
            <person name="Engel S.R."/>
            <person name="Dietrich F.S."/>
            <person name="Fisk D.G."/>
            <person name="Binkley G."/>
            <person name="Balakrishnan R."/>
            <person name="Costanzo M.C."/>
            <person name="Dwight S.S."/>
            <person name="Hitz B.C."/>
            <person name="Karra K."/>
            <person name="Nash R.S."/>
            <person name="Weng S."/>
            <person name="Wong E.D."/>
            <person name="Lloyd P."/>
            <person name="Skrzypek M.S."/>
            <person name="Miyasato S.R."/>
            <person name="Simison M."/>
            <person name="Cherry J.M."/>
        </authorList>
    </citation>
    <scope>GENOME REANNOTATION</scope>
    <source>
        <strain>ATCC 204508 / S288c</strain>
    </source>
</reference>
<reference key="4">
    <citation type="journal article" date="1999" name="Yeast">
        <title>A proposal for nomenclature of aldehyde dehydrogenases in Saccharomyces cerevisiae and characterization of the stress-inducible ALD2 and ALD3 genes.</title>
        <authorList>
            <person name="Navarro-Avino J.P."/>
            <person name="Prasad R."/>
            <person name="Miralles V.J."/>
            <person name="Benito R.M."/>
            <person name="Serrano R."/>
        </authorList>
    </citation>
    <scope>FUNCTION</scope>
    <scope>CATALYTIC ACTIVITY</scope>
    <scope>INDUCTION</scope>
</reference>
<reference key="5">
    <citation type="journal article" date="2002" name="Genes Dev.">
        <title>Subcellular localization of the yeast proteome.</title>
        <authorList>
            <person name="Kumar A."/>
            <person name="Agarwal S."/>
            <person name="Heyman J.A."/>
            <person name="Matson S."/>
            <person name="Heidtman M."/>
            <person name="Piccirillo S."/>
            <person name="Umansky L."/>
            <person name="Drawid A."/>
            <person name="Jansen R."/>
            <person name="Liu Y."/>
            <person name="Cheung K.-H."/>
            <person name="Miller P."/>
            <person name="Gerstein M."/>
            <person name="Roeder G.S."/>
            <person name="Snyder M."/>
        </authorList>
    </citation>
    <scope>SUBCELLULAR LOCATION [LARGE SCALE ANALYSIS]</scope>
</reference>
<reference key="6">
    <citation type="journal article" date="2003" name="Genetics">
        <title>Specialization of function among aldehyde dehydrogenases: the ALD2 and ALD3 genes are required for beta-alanine biosynthesis in Saccharomyces cerevisiae.</title>
        <authorList>
            <person name="White W.H."/>
            <person name="Skatrud P.L."/>
            <person name="Xue Z."/>
            <person name="Toyn J.H."/>
        </authorList>
    </citation>
    <scope>FUNCTION</scope>
    <scope>CATALYTIC ACTIVITY</scope>
</reference>
<reference key="7">
    <citation type="journal article" date="2003" name="Yeast">
        <title>Response to acetaldehyde stress in the yeast Saccharomyces cerevisiae involves a strain-dependent regulation of several ALD genes and is mediated by the general stress response pathway.</title>
        <authorList>
            <person name="Aranda A."/>
            <person name="del Olmo M."/>
        </authorList>
    </citation>
    <scope>INDUCTION</scope>
</reference>
<reference key="8">
    <citation type="journal article" date="2003" name="Nature">
        <title>Global analysis of protein expression in yeast.</title>
        <authorList>
            <person name="Ghaemmaghami S."/>
            <person name="Huh W.-K."/>
            <person name="Bower K."/>
            <person name="Howson R.W."/>
            <person name="Belle A."/>
            <person name="Dephoure N."/>
            <person name="O'Shea E.K."/>
            <person name="Weissman J.S."/>
        </authorList>
    </citation>
    <scope>LEVEL OF PROTEIN EXPRESSION [LARGE SCALE ANALYSIS]</scope>
</reference>
<keyword id="KW-0963">Cytoplasm</keyword>
<keyword id="KW-0520">NAD</keyword>
<keyword id="KW-0560">Oxidoreductase</keyword>
<keyword id="KW-0566">Pantothenate biosynthesis</keyword>
<keyword id="KW-1185">Reference proteome</keyword>
<proteinExistence type="evidence at protein level"/>